<sequence length="261" mass="29770">MAPSIATVKIARDMVLPLRIFVNRKQILQTNDKTSNKSNATIFEAPLLSNNSIICLKSPNTRIYLSQQDKKNLCDEIKEDLLLIVYELASPEIISSVLSKIRVGHSTDFQINVLPKLFAGADTDNAVTSHIQSVTRLAKFKYKLHYKHKWELDIFINSIKKIANLRHYLMFQTLTLNGFSLNAGPKTLLARKIEKQPQVPNLLIENGDADALDTPVEEDIKPVIEFMYKPVINLGEIIDVHVLHRPRRHKVRTQSKQPQEE</sequence>
<name>SAW1_YEAST</name>
<protein>
    <recommendedName>
        <fullName>Single-strand annealing weakened protein 1</fullName>
    </recommendedName>
</protein>
<gene>
    <name type="primary">SAW1</name>
    <name type="ordered locus">YAL027W</name>
</gene>
<reference key="1">
    <citation type="journal article" date="1995" name="Proc. Natl. Acad. Sci. U.S.A.">
        <title>The nucleotide sequence of chromosome I from Saccharomyces cerevisiae.</title>
        <authorList>
            <person name="Bussey H."/>
            <person name="Kaback D.B."/>
            <person name="Zhong W.-W."/>
            <person name="Vo D.H."/>
            <person name="Clark M.W."/>
            <person name="Fortin N."/>
            <person name="Hall J."/>
            <person name="Ouellette B.F.F."/>
            <person name="Keng T."/>
            <person name="Barton A.B."/>
            <person name="Su Y."/>
            <person name="Davies C.J."/>
            <person name="Storms R.K."/>
        </authorList>
    </citation>
    <scope>NUCLEOTIDE SEQUENCE [LARGE SCALE GENOMIC DNA]</scope>
    <source>
        <strain>ATCC 204508 / S288c</strain>
    </source>
</reference>
<reference key="2">
    <citation type="journal article" date="2014" name="G3 (Bethesda)">
        <title>The reference genome sequence of Saccharomyces cerevisiae: Then and now.</title>
        <authorList>
            <person name="Engel S.R."/>
            <person name="Dietrich F.S."/>
            <person name="Fisk D.G."/>
            <person name="Binkley G."/>
            <person name="Balakrishnan R."/>
            <person name="Costanzo M.C."/>
            <person name="Dwight S.S."/>
            <person name="Hitz B.C."/>
            <person name="Karra K."/>
            <person name="Nash R.S."/>
            <person name="Weng S."/>
            <person name="Wong E.D."/>
            <person name="Lloyd P."/>
            <person name="Skrzypek M.S."/>
            <person name="Miyasato S.R."/>
            <person name="Simison M."/>
            <person name="Cherry J.M."/>
        </authorList>
    </citation>
    <scope>GENOME REANNOTATION</scope>
    <source>
        <strain>ATCC 204508 / S288c</strain>
    </source>
</reference>
<reference key="3">
    <citation type="journal article" date="2007" name="Genome Res.">
        <title>Approaching a complete repository of sequence-verified protein-encoding clones for Saccharomyces cerevisiae.</title>
        <authorList>
            <person name="Hu Y."/>
            <person name="Rolfs A."/>
            <person name="Bhullar B."/>
            <person name="Murthy T.V.S."/>
            <person name="Zhu C."/>
            <person name="Berger M.F."/>
            <person name="Camargo A.A."/>
            <person name="Kelley F."/>
            <person name="McCarron S."/>
            <person name="Jepson D."/>
            <person name="Richardson A."/>
            <person name="Raphael J."/>
            <person name="Moreira D."/>
            <person name="Taycher E."/>
            <person name="Zuo D."/>
            <person name="Mohr S."/>
            <person name="Kane M.F."/>
            <person name="Williamson J."/>
            <person name="Simpson A.J.G."/>
            <person name="Bulyk M.L."/>
            <person name="Harlow E."/>
            <person name="Marsischky G."/>
            <person name="Kolodner R.D."/>
            <person name="LaBaer J."/>
        </authorList>
    </citation>
    <scope>NUCLEOTIDE SEQUENCE [GENOMIC DNA]</scope>
    <source>
        <strain>ATCC 204508 / S288c</strain>
    </source>
</reference>
<reference key="4">
    <citation type="journal article" date="2003" name="Nature">
        <title>Global analysis of protein localization in budding yeast.</title>
        <authorList>
            <person name="Huh W.-K."/>
            <person name="Falvo J.V."/>
            <person name="Gerke L.C."/>
            <person name="Carroll A.S."/>
            <person name="Howson R.W."/>
            <person name="Weissman J.S."/>
            <person name="O'Shea E.K."/>
        </authorList>
    </citation>
    <scope>SUBCELLULAR LOCATION [LARGE SCALE ANALYSIS]</scope>
</reference>
<reference key="5">
    <citation type="journal article" date="2003" name="Nature">
        <title>Global analysis of protein expression in yeast.</title>
        <authorList>
            <person name="Ghaemmaghami S."/>
            <person name="Huh W.-K."/>
            <person name="Bower K."/>
            <person name="Howson R.W."/>
            <person name="Belle A."/>
            <person name="Dephoure N."/>
            <person name="O'Shea E.K."/>
            <person name="Weissman J.S."/>
        </authorList>
    </citation>
    <scope>LEVEL OF PROTEIN EXPRESSION [LARGE SCALE ANALYSIS]</scope>
</reference>
<reference key="6">
    <citation type="journal article" date="2007" name="Genome Res.">
        <title>Examining protein protein interactions using endogenously tagged yeast arrays: the cross-and-capture system.</title>
        <authorList>
            <person name="Suter B."/>
            <person name="Fetchko M.J."/>
            <person name="Imhof R."/>
            <person name="Graham C.I."/>
            <person name="Stoffel-Studer I."/>
            <person name="Zbinden C."/>
            <person name="Raghavan M."/>
            <person name="Lopez L."/>
            <person name="Beneti L."/>
            <person name="Hort J."/>
            <person name="Fillingham J."/>
            <person name="Greenblatt J.F."/>
            <person name="Giaever G."/>
            <person name="Nislow C."/>
            <person name="Stagljar I."/>
        </authorList>
    </citation>
    <scope>INTERACTION WITH RAD1 AND RAD10</scope>
</reference>
<reference key="7">
    <citation type="journal article" date="2008" name="Mol. Cell">
        <title>Microarray-based genetic screen defines SAW1, a gene required for Rad1/Rad10-dependent processing of recombination intermediates.</title>
        <authorList>
            <person name="Li F."/>
            <person name="Dong J."/>
            <person name="Pan X."/>
            <person name="Oum J.-H."/>
            <person name="Boeke J.D."/>
            <person name="Lee S.E."/>
        </authorList>
    </citation>
    <scope>FUNCTION</scope>
    <scope>INTERACTION WITH RAD1; MSH2; MSH3; RAD51 AND RAD52</scope>
    <scope>DISRUPTION PHENOTYPE</scope>
</reference>
<evidence type="ECO:0000269" key="1">
    <source>
    </source>
</evidence>
<evidence type="ECO:0000269" key="2">
    <source>
    </source>
</evidence>
<evidence type="ECO:0000269" key="3">
    <source>
    </source>
</evidence>
<evidence type="ECO:0000269" key="4">
    <source>
    </source>
</evidence>
<organism>
    <name type="scientific">Saccharomyces cerevisiae (strain ATCC 204508 / S288c)</name>
    <name type="common">Baker's yeast</name>
    <dbReference type="NCBI Taxonomy" id="559292"/>
    <lineage>
        <taxon>Eukaryota</taxon>
        <taxon>Fungi</taxon>
        <taxon>Dikarya</taxon>
        <taxon>Ascomycota</taxon>
        <taxon>Saccharomycotina</taxon>
        <taxon>Saccharomycetes</taxon>
        <taxon>Saccharomycetales</taxon>
        <taxon>Saccharomycetaceae</taxon>
        <taxon>Saccharomyces</taxon>
    </lineage>
</organism>
<comment type="function">
    <text evidence="4">Catalyzes 3'-non-homologous tail removal of RAD1/RAD10-dependent single-strand annealing recombination intermediates. Plays a key role in targeting RAD1/RAD10 complex to 3'-flap cleavage substrate in recombination. Also contributes to the integrity of ribosomal DNA arrays.</text>
</comment>
<comment type="subunit">
    <text evidence="3 4">Interacts with MSH2, MSH3, RAD1, RAD10, RAD51 and RAD52.</text>
</comment>
<comment type="interaction">
    <interactant intactId="EBI-20627">
        <id>P39735</id>
    </interactant>
    <interactant intactId="EBI-14752">
        <id>P06777</id>
        <label>RAD1</label>
    </interactant>
    <organismsDiffer>false</organismsDiffer>
    <experiments>5</experiments>
</comment>
<comment type="subcellular location">
    <subcellularLocation>
        <location evidence="1">Nucleus</location>
    </subcellularLocation>
</comment>
<comment type="disruption phenotype">
    <text evidence="4">Accumulates recombination intermediates blocked at the RAD1/RAD10-dependent 3' flap cleavage step. Abolishes association of RAD1 at single-strand annealing (SSA) intermediates. Insensitive to MMS, HU, or phleomycin treatment. Doesn't sensitize cells to UV lesions. Substantially increases the rDNA recombination rate.</text>
</comment>
<comment type="miscellaneous">
    <text evidence="2">Present with 1170 molecules/cell in log phase SD medium.</text>
</comment>
<keyword id="KW-0227">DNA damage</keyword>
<keyword id="KW-0234">DNA repair</keyword>
<keyword id="KW-0539">Nucleus</keyword>
<keyword id="KW-1185">Reference proteome</keyword>
<feature type="chain" id="PRO_0000202414" description="Single-strand annealing weakened protein 1">
    <location>
        <begin position="1"/>
        <end position="261"/>
    </location>
</feature>
<accession>P39735</accession>
<accession>D6VPJ1</accession>
<dbReference type="EMBL" id="U12980">
    <property type="protein sequence ID" value="AAC05005.1"/>
    <property type="molecule type" value="Genomic_DNA"/>
</dbReference>
<dbReference type="EMBL" id="AY692559">
    <property type="protein sequence ID" value="AAT92578.1"/>
    <property type="molecule type" value="Genomic_DNA"/>
</dbReference>
<dbReference type="EMBL" id="BK006935">
    <property type="protein sequence ID" value="DAA06961.1"/>
    <property type="molecule type" value="Genomic_DNA"/>
</dbReference>
<dbReference type="PIR" id="S51994">
    <property type="entry name" value="S51994"/>
</dbReference>
<dbReference type="RefSeq" id="NP_009375.1">
    <property type="nucleotide sequence ID" value="NM_001178172.1"/>
</dbReference>
<dbReference type="BioGRID" id="31739">
    <property type="interactions" value="82"/>
</dbReference>
<dbReference type="ComplexPortal" id="CPX-1363">
    <property type="entry name" value="SAW1-RAD1-RAD10 endonuclease complex"/>
</dbReference>
<dbReference type="DIP" id="DIP-6595N"/>
<dbReference type="FunCoup" id="P39735">
    <property type="interactions" value="85"/>
</dbReference>
<dbReference type="IntAct" id="P39735">
    <property type="interactions" value="23"/>
</dbReference>
<dbReference type="MINT" id="P39735"/>
<dbReference type="STRING" id="4932.YAL027W"/>
<dbReference type="PaxDb" id="4932-YAL027W"/>
<dbReference type="PeptideAtlas" id="P39735"/>
<dbReference type="TopDownProteomics" id="P39735"/>
<dbReference type="EnsemblFungi" id="YAL027W_mRNA">
    <property type="protein sequence ID" value="YAL027W"/>
    <property type="gene ID" value="YAL027W"/>
</dbReference>
<dbReference type="GeneID" id="851206"/>
<dbReference type="KEGG" id="sce:YAL027W"/>
<dbReference type="AGR" id="SGD:S000000025"/>
<dbReference type="SGD" id="S000000025">
    <property type="gene designation" value="SAW1"/>
</dbReference>
<dbReference type="VEuPathDB" id="FungiDB:YAL027W"/>
<dbReference type="eggNOG" id="ENOG502S0N2">
    <property type="taxonomic scope" value="Eukaryota"/>
</dbReference>
<dbReference type="HOGENOM" id="CLU_091781_0_0_1"/>
<dbReference type="InParanoid" id="P39735"/>
<dbReference type="OMA" id="HKWELDI"/>
<dbReference type="OrthoDB" id="4034365at2759"/>
<dbReference type="BioCyc" id="YEAST:G3O-28838-MONOMER"/>
<dbReference type="BioGRID-ORCS" id="851206">
    <property type="hits" value="3 hits in 10 CRISPR screens"/>
</dbReference>
<dbReference type="PRO" id="PR:P39735"/>
<dbReference type="Proteomes" id="UP000002311">
    <property type="component" value="Chromosome I"/>
</dbReference>
<dbReference type="RNAct" id="P39735">
    <property type="molecule type" value="protein"/>
</dbReference>
<dbReference type="GO" id="GO:1905348">
    <property type="term" value="C:endonuclease complex"/>
    <property type="evidence" value="ECO:0000353"/>
    <property type="project" value="ComplexPortal"/>
</dbReference>
<dbReference type="GO" id="GO:0005634">
    <property type="term" value="C:nucleus"/>
    <property type="evidence" value="ECO:0007005"/>
    <property type="project" value="SGD"/>
</dbReference>
<dbReference type="GO" id="GO:0070337">
    <property type="term" value="F:3'-flap-structured DNA binding"/>
    <property type="evidence" value="ECO:0000314"/>
    <property type="project" value="SGD"/>
</dbReference>
<dbReference type="GO" id="GO:0070338">
    <property type="term" value="F:5'-flap-structured DNA binding"/>
    <property type="evidence" value="ECO:0000314"/>
    <property type="project" value="SGD"/>
</dbReference>
<dbReference type="GO" id="GO:0000405">
    <property type="term" value="F:bubble DNA binding"/>
    <property type="evidence" value="ECO:0000314"/>
    <property type="project" value="SGD"/>
</dbReference>
<dbReference type="GO" id="GO:0000403">
    <property type="term" value="F:Y-form DNA binding"/>
    <property type="evidence" value="ECO:0000314"/>
    <property type="project" value="SGD"/>
</dbReference>
<dbReference type="GO" id="GO:0000736">
    <property type="term" value="P:double-strand break repair via single-strand annealing, removal of nonhomologous ends"/>
    <property type="evidence" value="ECO:0000315"/>
    <property type="project" value="SGD"/>
</dbReference>
<dbReference type="InterPro" id="IPR021624">
    <property type="entry name" value="Saw1"/>
</dbReference>
<dbReference type="Pfam" id="PF11561">
    <property type="entry name" value="Saw1"/>
    <property type="match status" value="1"/>
</dbReference>
<proteinExistence type="evidence at protein level"/>